<accession>A1U0K1</accession>
<dbReference type="EC" id="2.4.1.18" evidence="1"/>
<dbReference type="EMBL" id="CP000514">
    <property type="protein sequence ID" value="ABM18520.1"/>
    <property type="molecule type" value="Genomic_DNA"/>
</dbReference>
<dbReference type="RefSeq" id="WP_011784922.1">
    <property type="nucleotide sequence ID" value="NC_008740.1"/>
</dbReference>
<dbReference type="SMR" id="A1U0K1"/>
<dbReference type="STRING" id="351348.Maqu_1434"/>
<dbReference type="CAZy" id="CBM48">
    <property type="family name" value="Carbohydrate-Binding Module Family 48"/>
</dbReference>
<dbReference type="CAZy" id="GH13">
    <property type="family name" value="Glycoside Hydrolase Family 13"/>
</dbReference>
<dbReference type="KEGG" id="maq:Maqu_1434"/>
<dbReference type="eggNOG" id="COG0296">
    <property type="taxonomic scope" value="Bacteria"/>
</dbReference>
<dbReference type="HOGENOM" id="CLU_004245_3_2_6"/>
<dbReference type="OrthoDB" id="9800174at2"/>
<dbReference type="UniPathway" id="UPA00164"/>
<dbReference type="Proteomes" id="UP000000998">
    <property type="component" value="Chromosome"/>
</dbReference>
<dbReference type="GO" id="GO:0005829">
    <property type="term" value="C:cytosol"/>
    <property type="evidence" value="ECO:0007669"/>
    <property type="project" value="TreeGrafter"/>
</dbReference>
<dbReference type="GO" id="GO:0003844">
    <property type="term" value="F:1,4-alpha-glucan branching enzyme activity"/>
    <property type="evidence" value="ECO:0007669"/>
    <property type="project" value="UniProtKB-UniRule"/>
</dbReference>
<dbReference type="GO" id="GO:0043169">
    <property type="term" value="F:cation binding"/>
    <property type="evidence" value="ECO:0007669"/>
    <property type="project" value="InterPro"/>
</dbReference>
<dbReference type="GO" id="GO:0004553">
    <property type="term" value="F:hydrolase activity, hydrolyzing O-glycosyl compounds"/>
    <property type="evidence" value="ECO:0007669"/>
    <property type="project" value="InterPro"/>
</dbReference>
<dbReference type="GO" id="GO:0005978">
    <property type="term" value="P:glycogen biosynthetic process"/>
    <property type="evidence" value="ECO:0007669"/>
    <property type="project" value="UniProtKB-UniRule"/>
</dbReference>
<dbReference type="CDD" id="cd11322">
    <property type="entry name" value="AmyAc_Glg_BE"/>
    <property type="match status" value="1"/>
</dbReference>
<dbReference type="CDD" id="cd02855">
    <property type="entry name" value="E_set_GBE_prok_N"/>
    <property type="match status" value="1"/>
</dbReference>
<dbReference type="FunFam" id="2.60.40.10:FF:000169">
    <property type="entry name" value="1,4-alpha-glucan branching enzyme GlgB"/>
    <property type="match status" value="1"/>
</dbReference>
<dbReference type="FunFam" id="2.60.40.1180:FF:000002">
    <property type="entry name" value="1,4-alpha-glucan branching enzyme GlgB"/>
    <property type="match status" value="1"/>
</dbReference>
<dbReference type="FunFam" id="3.20.20.80:FF:000003">
    <property type="entry name" value="1,4-alpha-glucan branching enzyme GlgB"/>
    <property type="match status" value="1"/>
</dbReference>
<dbReference type="Gene3D" id="3.20.20.80">
    <property type="entry name" value="Glycosidases"/>
    <property type="match status" value="1"/>
</dbReference>
<dbReference type="Gene3D" id="2.60.40.1180">
    <property type="entry name" value="Golgi alpha-mannosidase II"/>
    <property type="match status" value="1"/>
</dbReference>
<dbReference type="Gene3D" id="2.60.40.10">
    <property type="entry name" value="Immunoglobulins"/>
    <property type="match status" value="1"/>
</dbReference>
<dbReference type="HAMAP" id="MF_00685">
    <property type="entry name" value="GlgB"/>
    <property type="match status" value="1"/>
</dbReference>
<dbReference type="InterPro" id="IPR006048">
    <property type="entry name" value="A-amylase/branching_C"/>
</dbReference>
<dbReference type="InterPro" id="IPR037439">
    <property type="entry name" value="Branching_enzy"/>
</dbReference>
<dbReference type="InterPro" id="IPR006407">
    <property type="entry name" value="GlgB"/>
</dbReference>
<dbReference type="InterPro" id="IPR044143">
    <property type="entry name" value="GlgB_N_E_set_prok"/>
</dbReference>
<dbReference type="InterPro" id="IPR006047">
    <property type="entry name" value="Glyco_hydro_13_cat_dom"/>
</dbReference>
<dbReference type="InterPro" id="IPR004193">
    <property type="entry name" value="Glyco_hydro_13_N"/>
</dbReference>
<dbReference type="InterPro" id="IPR013780">
    <property type="entry name" value="Glyco_hydro_b"/>
</dbReference>
<dbReference type="InterPro" id="IPR017853">
    <property type="entry name" value="Glycoside_hydrolase_SF"/>
</dbReference>
<dbReference type="InterPro" id="IPR013783">
    <property type="entry name" value="Ig-like_fold"/>
</dbReference>
<dbReference type="InterPro" id="IPR014756">
    <property type="entry name" value="Ig_E-set"/>
</dbReference>
<dbReference type="NCBIfam" id="TIGR01515">
    <property type="entry name" value="branching_enzym"/>
    <property type="match status" value="1"/>
</dbReference>
<dbReference type="NCBIfam" id="NF003811">
    <property type="entry name" value="PRK05402.1"/>
    <property type="match status" value="1"/>
</dbReference>
<dbReference type="NCBIfam" id="NF008967">
    <property type="entry name" value="PRK12313.1"/>
    <property type="match status" value="1"/>
</dbReference>
<dbReference type="PANTHER" id="PTHR43651">
    <property type="entry name" value="1,4-ALPHA-GLUCAN-BRANCHING ENZYME"/>
    <property type="match status" value="1"/>
</dbReference>
<dbReference type="PANTHER" id="PTHR43651:SF3">
    <property type="entry name" value="1,4-ALPHA-GLUCAN-BRANCHING ENZYME"/>
    <property type="match status" value="1"/>
</dbReference>
<dbReference type="Pfam" id="PF00128">
    <property type="entry name" value="Alpha-amylase"/>
    <property type="match status" value="2"/>
</dbReference>
<dbReference type="Pfam" id="PF02806">
    <property type="entry name" value="Alpha-amylase_C"/>
    <property type="match status" value="1"/>
</dbReference>
<dbReference type="Pfam" id="PF02922">
    <property type="entry name" value="CBM_48"/>
    <property type="match status" value="1"/>
</dbReference>
<dbReference type="PIRSF" id="PIRSF000463">
    <property type="entry name" value="GlgB"/>
    <property type="match status" value="1"/>
</dbReference>
<dbReference type="SMART" id="SM00642">
    <property type="entry name" value="Aamy"/>
    <property type="match status" value="1"/>
</dbReference>
<dbReference type="SUPFAM" id="SSF51445">
    <property type="entry name" value="(Trans)glycosidases"/>
    <property type="match status" value="1"/>
</dbReference>
<dbReference type="SUPFAM" id="SSF81296">
    <property type="entry name" value="E set domains"/>
    <property type="match status" value="1"/>
</dbReference>
<dbReference type="SUPFAM" id="SSF51011">
    <property type="entry name" value="Glycosyl hydrolase domain"/>
    <property type="match status" value="1"/>
</dbReference>
<keyword id="KW-0119">Carbohydrate metabolism</keyword>
<keyword id="KW-0320">Glycogen biosynthesis</keyword>
<keyword id="KW-0321">Glycogen metabolism</keyword>
<keyword id="KW-0328">Glycosyltransferase</keyword>
<keyword id="KW-0808">Transferase</keyword>
<sequence>MESPALSEFDLHLFAEGRHWHIYNVLGAHLVNHRGTEGTRFAVWAPNARAVSVIGDFNNWDSGRHAMAVNNGYGVWSLFIPGVKAGHLYKFAITTRNGHHITKTDPYGQAFEHRPSNAAVVTERGHYAWGDGDWLERRNRFDWQQSPISVYEVHPGSWRHHGSGRWLTYRELADQLVPYVLETGFTHIELLPVTEHPLDESWGYQTTGYYAPTSRFGSPDDLRYFVDQCHQNNIGVILDWVPGHFPDDDFALAEFDGTALYEHEDPRRGRHQDWGTLIYNYGRHEVRNFLIGSALFWLDTFHMDGLRVDAVASMLYLNYSRNEGEWLPNEHGGHENLDAIRFLQDLNRVCQSRFPGVLMMAEESTSWPRVTRPPEIGGLGFNLKWNMGWMHDTLHYLQQDPVYRQYHHDKLTFGLLYAFSENFVLPLSHDEVVHGKSSLIQKMPGDDWQQRASLRLLFSYMFSYPGAKLLFMGGEFGQRQEWSERRELDWYLLQYPEHQGLRKLVQDLNGLYRRYPALHRKSFTSEGFEWIDCHDSTQSVISFLRNPGTPEHGPLVIVANFTPIPRHHYRIGVPTGGNWQEIFNSDSTWYGGSNLGNPLLLQAEPTPWMARPCSVELTVPPLGLVMLRPAT</sequence>
<reference key="1">
    <citation type="journal article" date="2011" name="Appl. Environ. Microbiol.">
        <title>Genomic potential of Marinobacter aquaeolei, a biogeochemical 'opportunitroph'.</title>
        <authorList>
            <person name="Singer E."/>
            <person name="Webb E.A."/>
            <person name="Nelson W.C."/>
            <person name="Heidelberg J.F."/>
            <person name="Ivanova N."/>
            <person name="Pati A."/>
            <person name="Edwards K.J."/>
        </authorList>
    </citation>
    <scope>NUCLEOTIDE SEQUENCE [LARGE SCALE GENOMIC DNA]</scope>
    <source>
        <strain>ATCC 700491 / DSM 11845 / VT8</strain>
    </source>
</reference>
<proteinExistence type="inferred from homology"/>
<feature type="chain" id="PRO_1000212550" description="1,4-alpha-glucan branching enzyme GlgB">
    <location>
        <begin position="1"/>
        <end position="631"/>
    </location>
</feature>
<feature type="active site" description="Nucleophile" evidence="1">
    <location>
        <position position="309"/>
    </location>
</feature>
<feature type="active site" description="Proton donor" evidence="1">
    <location>
        <position position="362"/>
    </location>
</feature>
<protein>
    <recommendedName>
        <fullName evidence="1">1,4-alpha-glucan branching enzyme GlgB</fullName>
        <ecNumber evidence="1">2.4.1.18</ecNumber>
    </recommendedName>
    <alternativeName>
        <fullName evidence="1">1,4-alpha-D-glucan:1,4-alpha-D-glucan 6-glucosyl-transferase</fullName>
    </alternativeName>
    <alternativeName>
        <fullName evidence="1">Alpha-(1-&gt;4)-glucan branching enzyme</fullName>
    </alternativeName>
    <alternativeName>
        <fullName evidence="1">Glycogen branching enzyme</fullName>
        <shortName evidence="1">BE</shortName>
    </alternativeName>
</protein>
<gene>
    <name evidence="1" type="primary">glgB</name>
    <name type="ordered locus">Maqu_1434</name>
</gene>
<evidence type="ECO:0000255" key="1">
    <source>
        <dbReference type="HAMAP-Rule" id="MF_00685"/>
    </source>
</evidence>
<organism>
    <name type="scientific">Marinobacter nauticus (strain ATCC 700491 / DSM 11845 / VT8)</name>
    <name type="common">Marinobacter aquaeolei</name>
    <dbReference type="NCBI Taxonomy" id="351348"/>
    <lineage>
        <taxon>Bacteria</taxon>
        <taxon>Pseudomonadati</taxon>
        <taxon>Pseudomonadota</taxon>
        <taxon>Gammaproteobacteria</taxon>
        <taxon>Pseudomonadales</taxon>
        <taxon>Marinobacteraceae</taxon>
        <taxon>Marinobacter</taxon>
    </lineage>
</organism>
<name>GLGB_MARN8</name>
<comment type="function">
    <text evidence="1">Catalyzes the formation of the alpha-1,6-glucosidic linkages in glycogen by scission of a 1,4-alpha-linked oligosaccharide from growing alpha-1,4-glucan chains and the subsequent attachment of the oligosaccharide to the alpha-1,6 position.</text>
</comment>
<comment type="catalytic activity">
    <reaction evidence="1">
        <text>Transfers a segment of a (1-&gt;4)-alpha-D-glucan chain to a primary hydroxy group in a similar glucan chain.</text>
        <dbReference type="EC" id="2.4.1.18"/>
    </reaction>
</comment>
<comment type="pathway">
    <text evidence="1">Glycan biosynthesis; glycogen biosynthesis.</text>
</comment>
<comment type="subunit">
    <text evidence="1">Monomer.</text>
</comment>
<comment type="similarity">
    <text evidence="1">Belongs to the glycosyl hydrolase 13 family. GlgB subfamily.</text>
</comment>